<protein>
    <recommendedName>
        <fullName evidence="1">Putative 3-methyladenine DNA glycosylase</fullName>
        <ecNumber evidence="1">3.2.2.-</ecNumber>
    </recommendedName>
</protein>
<accession>Q92IE0</accession>
<gene>
    <name type="ordered locus">RC0480</name>
</gene>
<feature type="chain" id="PRO_0000100101" description="Putative 3-methyladenine DNA glycosylase">
    <location>
        <begin position="1"/>
        <end position="183"/>
    </location>
</feature>
<dbReference type="EC" id="3.2.2.-" evidence="1"/>
<dbReference type="EMBL" id="AE006914">
    <property type="protein sequence ID" value="AAL03018.1"/>
    <property type="molecule type" value="Genomic_DNA"/>
</dbReference>
<dbReference type="PIR" id="H97759">
    <property type="entry name" value="H97759"/>
</dbReference>
<dbReference type="RefSeq" id="WP_010977122.1">
    <property type="nucleotide sequence ID" value="NC_003103.1"/>
</dbReference>
<dbReference type="SMR" id="Q92IE0"/>
<dbReference type="GeneID" id="927608"/>
<dbReference type="KEGG" id="rco:RC0480"/>
<dbReference type="PATRIC" id="fig|272944.4.peg.549"/>
<dbReference type="HOGENOM" id="CLU_060471_4_1_5"/>
<dbReference type="Proteomes" id="UP000000816">
    <property type="component" value="Chromosome"/>
</dbReference>
<dbReference type="GO" id="GO:0003905">
    <property type="term" value="F:alkylbase DNA N-glycosylase activity"/>
    <property type="evidence" value="ECO:0007669"/>
    <property type="project" value="InterPro"/>
</dbReference>
<dbReference type="GO" id="GO:0003677">
    <property type="term" value="F:DNA binding"/>
    <property type="evidence" value="ECO:0007669"/>
    <property type="project" value="InterPro"/>
</dbReference>
<dbReference type="GO" id="GO:0006284">
    <property type="term" value="P:base-excision repair"/>
    <property type="evidence" value="ECO:0007669"/>
    <property type="project" value="InterPro"/>
</dbReference>
<dbReference type="CDD" id="cd00540">
    <property type="entry name" value="AAG"/>
    <property type="match status" value="1"/>
</dbReference>
<dbReference type="Gene3D" id="3.10.300.10">
    <property type="entry name" value="Methylpurine-DNA glycosylase (MPG)"/>
    <property type="match status" value="2"/>
</dbReference>
<dbReference type="HAMAP" id="MF_00527">
    <property type="entry name" value="3MGH"/>
    <property type="match status" value="1"/>
</dbReference>
<dbReference type="InterPro" id="IPR011034">
    <property type="entry name" value="Formyl_transferase-like_C_sf"/>
</dbReference>
<dbReference type="InterPro" id="IPR003180">
    <property type="entry name" value="MPG"/>
</dbReference>
<dbReference type="InterPro" id="IPR036995">
    <property type="entry name" value="MPG_sf"/>
</dbReference>
<dbReference type="NCBIfam" id="TIGR00567">
    <property type="entry name" value="3mg"/>
    <property type="match status" value="1"/>
</dbReference>
<dbReference type="NCBIfam" id="NF002004">
    <property type="entry name" value="PRK00802.1-4"/>
    <property type="match status" value="1"/>
</dbReference>
<dbReference type="PANTHER" id="PTHR10429">
    <property type="entry name" value="DNA-3-METHYLADENINE GLYCOSYLASE"/>
    <property type="match status" value="1"/>
</dbReference>
<dbReference type="PANTHER" id="PTHR10429:SF0">
    <property type="entry name" value="DNA-3-METHYLADENINE GLYCOSYLASE"/>
    <property type="match status" value="1"/>
</dbReference>
<dbReference type="Pfam" id="PF02245">
    <property type="entry name" value="Pur_DNA_glyco"/>
    <property type="match status" value="1"/>
</dbReference>
<dbReference type="SUPFAM" id="SSF50486">
    <property type="entry name" value="FMT C-terminal domain-like"/>
    <property type="match status" value="1"/>
</dbReference>
<reference key="1">
    <citation type="journal article" date="2001" name="Science">
        <title>Mechanisms of evolution in Rickettsia conorii and R. prowazekii.</title>
        <authorList>
            <person name="Ogata H."/>
            <person name="Audic S."/>
            <person name="Renesto-Audiffren P."/>
            <person name="Fournier P.-E."/>
            <person name="Barbe V."/>
            <person name="Samson D."/>
            <person name="Roux V."/>
            <person name="Cossart P."/>
            <person name="Weissenbach J."/>
            <person name="Claverie J.-M."/>
            <person name="Raoult D."/>
        </authorList>
    </citation>
    <scope>NUCLEOTIDE SEQUENCE [LARGE SCALE GENOMIC DNA]</scope>
    <source>
        <strain>ATCC VR-613 / Malish 7</strain>
    </source>
</reference>
<proteinExistence type="inferred from homology"/>
<keyword id="KW-0227">DNA damage</keyword>
<keyword id="KW-0234">DNA repair</keyword>
<keyword id="KW-0378">Hydrolase</keyword>
<organism>
    <name type="scientific">Rickettsia conorii (strain ATCC VR-613 / Malish 7)</name>
    <dbReference type="NCBI Taxonomy" id="272944"/>
    <lineage>
        <taxon>Bacteria</taxon>
        <taxon>Pseudomonadati</taxon>
        <taxon>Pseudomonadota</taxon>
        <taxon>Alphaproteobacteria</taxon>
        <taxon>Rickettsiales</taxon>
        <taxon>Rickettsiaceae</taxon>
        <taxon>Rickettsieae</taxon>
        <taxon>Rickettsia</taxon>
        <taxon>spotted fever group</taxon>
    </lineage>
</organism>
<sequence>MNKLIPVPREFFARDTNVVSTELIGKALYFQGKTAIITETESYIGQNDPACHAARGRTKRTDIMFGPAGFSYVYLIYGMYYCLNFVTEAKGFPAATLIRGVHVILPENLYLNGPGKLCKYLGINISHNKCDLINNNEFFVGDIGLKLPYSTTARIGITKGTDKLWRYVVTDITNLISQYNVQP</sequence>
<comment type="similarity">
    <text evidence="1">Belongs to the DNA glycosylase MPG family.</text>
</comment>
<name>3MGH_RICCN</name>
<evidence type="ECO:0000255" key="1">
    <source>
        <dbReference type="HAMAP-Rule" id="MF_00527"/>
    </source>
</evidence>